<protein>
    <recommendedName>
        <fullName>Lipoprotein-releasing system transmembrane protein LolC</fullName>
    </recommendedName>
</protein>
<organism>
    <name type="scientific">Buchnera aphidicola subsp. Acyrthosiphon pisum (strain APS)</name>
    <name type="common">Acyrthosiphon pisum symbiotic bacterium</name>
    <dbReference type="NCBI Taxonomy" id="107806"/>
    <lineage>
        <taxon>Bacteria</taxon>
        <taxon>Pseudomonadati</taxon>
        <taxon>Pseudomonadota</taxon>
        <taxon>Gammaproteobacteria</taxon>
        <taxon>Enterobacterales</taxon>
        <taxon>Erwiniaceae</taxon>
        <taxon>Buchnera</taxon>
    </lineage>
</organism>
<keyword id="KW-1003">Cell membrane</keyword>
<keyword id="KW-0472">Membrane</keyword>
<keyword id="KW-1185">Reference proteome</keyword>
<keyword id="KW-0812">Transmembrane</keyword>
<keyword id="KW-1133">Transmembrane helix</keyword>
<keyword id="KW-0813">Transport</keyword>
<gene>
    <name type="primary">lolC</name>
    <name type="ordered locus">BU295</name>
</gene>
<dbReference type="EMBL" id="BA000003">
    <property type="protein sequence ID" value="BAB13005.1"/>
    <property type="molecule type" value="Genomic_DNA"/>
</dbReference>
<dbReference type="RefSeq" id="NP_240119.1">
    <property type="nucleotide sequence ID" value="NC_002528.1"/>
</dbReference>
<dbReference type="RefSeq" id="WP_009874249.1">
    <property type="nucleotide sequence ID" value="NZ_AP036055.1"/>
</dbReference>
<dbReference type="SMR" id="P57382"/>
<dbReference type="STRING" id="563178.BUAP5A_290"/>
<dbReference type="EnsemblBacteria" id="BAB13005">
    <property type="protein sequence ID" value="BAB13005"/>
    <property type="gene ID" value="BAB13005"/>
</dbReference>
<dbReference type="KEGG" id="buc:BU295"/>
<dbReference type="PATRIC" id="fig|107806.10.peg.305"/>
<dbReference type="eggNOG" id="COG4591">
    <property type="taxonomic scope" value="Bacteria"/>
</dbReference>
<dbReference type="HOGENOM" id="CLU_000604_8_1_6"/>
<dbReference type="Proteomes" id="UP000001806">
    <property type="component" value="Chromosome"/>
</dbReference>
<dbReference type="GO" id="GO:0098797">
    <property type="term" value="C:plasma membrane protein complex"/>
    <property type="evidence" value="ECO:0007669"/>
    <property type="project" value="TreeGrafter"/>
</dbReference>
<dbReference type="GO" id="GO:0044874">
    <property type="term" value="P:lipoprotein localization to outer membrane"/>
    <property type="evidence" value="ECO:0007669"/>
    <property type="project" value="TreeGrafter"/>
</dbReference>
<dbReference type="GO" id="GO:0042953">
    <property type="term" value="P:lipoprotein transport"/>
    <property type="evidence" value="ECO:0007669"/>
    <property type="project" value="InterPro"/>
</dbReference>
<dbReference type="InterPro" id="IPR003838">
    <property type="entry name" value="ABC3_permease_C"/>
</dbReference>
<dbReference type="InterPro" id="IPR051447">
    <property type="entry name" value="Lipoprotein-release_system"/>
</dbReference>
<dbReference type="InterPro" id="IPR011925">
    <property type="entry name" value="LolCE_TM"/>
</dbReference>
<dbReference type="InterPro" id="IPR025857">
    <property type="entry name" value="MacB_PCD"/>
</dbReference>
<dbReference type="NCBIfam" id="TIGR02212">
    <property type="entry name" value="lolCE"/>
    <property type="match status" value="1"/>
</dbReference>
<dbReference type="PANTHER" id="PTHR30489">
    <property type="entry name" value="LIPOPROTEIN-RELEASING SYSTEM TRANSMEMBRANE PROTEIN LOLE"/>
    <property type="match status" value="1"/>
</dbReference>
<dbReference type="PANTHER" id="PTHR30489:SF0">
    <property type="entry name" value="LIPOPROTEIN-RELEASING SYSTEM TRANSMEMBRANE PROTEIN LOLE"/>
    <property type="match status" value="1"/>
</dbReference>
<dbReference type="Pfam" id="PF02687">
    <property type="entry name" value="FtsX"/>
    <property type="match status" value="1"/>
</dbReference>
<dbReference type="Pfam" id="PF12704">
    <property type="entry name" value="MacB_PCD"/>
    <property type="match status" value="1"/>
</dbReference>
<proteinExistence type="inferred from homology"/>
<feature type="chain" id="PRO_0000201808" description="Lipoprotein-releasing system transmembrane protein LolC">
    <location>
        <begin position="1"/>
        <end position="399"/>
    </location>
</feature>
<feature type="transmembrane region" description="Helical" evidence="2">
    <location>
        <begin position="25"/>
        <end position="45"/>
    </location>
</feature>
<feature type="transmembrane region" description="Helical" evidence="2">
    <location>
        <begin position="266"/>
        <end position="286"/>
    </location>
</feature>
<feature type="transmembrane region" description="Helical" evidence="2">
    <location>
        <begin position="312"/>
        <end position="332"/>
    </location>
</feature>
<feature type="transmembrane region" description="Helical" evidence="2">
    <location>
        <begin position="358"/>
        <end position="378"/>
    </location>
</feature>
<sequence>MYKPISLFIALRYLWNTHLPNFKKIITILSIIGISITTASLIIITSIINGSEKNFEKNILSFIPHLIITNKNQCIKKDQFPENILKLNNIKNISDLISKEIIVQSKNDISMAEVIGIDHTNYYNIHNYNIKSVLKTLKPGYYNIIIGKQLARKLNVFIGDRLKLIFLSNTKNFFSGEIFKQRTFKIINFFSTKKEVDYYQILMNKEDSLNFLNYSKDYVTGWRVWLKNPLSLNVNEIKKITHPLFLLDWTTQKGELFKAMKIEKYIMFLFLFLVLLVSILNIVVILTICTVEKQNAVAILQTQGLLNCKIMLIFIIFGSSTAIIGNILGTLISLTLIIQNDFLKFFINIFIDETNIPIIVIPYQIFFINITITLFTILSTLYPSWKAIQLKPSRILSNE</sequence>
<accession>P57382</accession>
<comment type="function">
    <text evidence="1">Part of an ATP-dependent transport system responsible for the release of lipoproteins targeted to the outer membrane from the inner membrane. Such a release is dependent of the sorting-signal (absence of an Asp at position 2 of the mature lipoprotein) and of LolA (By similarity).</text>
</comment>
<comment type="subcellular location">
    <subcellularLocation>
        <location evidence="1">Cell membrane</location>
        <topology evidence="1">Multi-pass membrane protein</topology>
    </subcellularLocation>
</comment>
<comment type="similarity">
    <text evidence="3">Belongs to the ABC-4 integral membrane protein family. LolC/E subfamily.</text>
</comment>
<reference key="1">
    <citation type="journal article" date="2000" name="Nature">
        <title>Genome sequence of the endocellular bacterial symbiont of aphids Buchnera sp. APS.</title>
        <authorList>
            <person name="Shigenobu S."/>
            <person name="Watanabe H."/>
            <person name="Hattori M."/>
            <person name="Sakaki Y."/>
            <person name="Ishikawa H."/>
        </authorList>
    </citation>
    <scope>NUCLEOTIDE SEQUENCE [LARGE SCALE GENOMIC DNA]</scope>
    <source>
        <strain>APS</strain>
    </source>
</reference>
<name>LOLC_BUCAI</name>
<evidence type="ECO:0000250" key="1"/>
<evidence type="ECO:0000255" key="2"/>
<evidence type="ECO:0000305" key="3"/>